<proteinExistence type="inferred from homology"/>
<accession>B8HRF1</accession>
<protein>
    <recommendedName>
        <fullName evidence="1">Photosystem I reaction center subunit VIII</fullName>
    </recommendedName>
</protein>
<dbReference type="EMBL" id="CP001344">
    <property type="protein sequence ID" value="ACL44139.1"/>
    <property type="molecule type" value="Genomic_DNA"/>
</dbReference>
<dbReference type="SMR" id="B8HRF1"/>
<dbReference type="STRING" id="395961.Cyan7425_1771"/>
<dbReference type="KEGG" id="cyn:Cyan7425_1771"/>
<dbReference type="eggNOG" id="ENOG5033AVJ">
    <property type="taxonomic scope" value="Bacteria"/>
</dbReference>
<dbReference type="HOGENOM" id="CLU_215282_0_0_3"/>
<dbReference type="OrthoDB" id="467737at2"/>
<dbReference type="GO" id="GO:0009522">
    <property type="term" value="C:photosystem I"/>
    <property type="evidence" value="ECO:0007669"/>
    <property type="project" value="UniProtKB-KW"/>
</dbReference>
<dbReference type="GO" id="GO:0031676">
    <property type="term" value="C:plasma membrane-derived thylakoid membrane"/>
    <property type="evidence" value="ECO:0007669"/>
    <property type="project" value="UniProtKB-SubCell"/>
</dbReference>
<dbReference type="GO" id="GO:0015979">
    <property type="term" value="P:photosynthesis"/>
    <property type="evidence" value="ECO:0007669"/>
    <property type="project" value="UniProtKB-UniRule"/>
</dbReference>
<dbReference type="HAMAP" id="MF_00431">
    <property type="entry name" value="PSI_PsaI"/>
    <property type="match status" value="1"/>
</dbReference>
<dbReference type="InterPro" id="IPR001302">
    <property type="entry name" value="PSI_PsaI"/>
</dbReference>
<dbReference type="InterPro" id="IPR036357">
    <property type="entry name" value="PSI_PsaI_sf"/>
</dbReference>
<dbReference type="NCBIfam" id="NF008830">
    <property type="entry name" value="PRK11877.1"/>
    <property type="match status" value="1"/>
</dbReference>
<dbReference type="NCBIfam" id="TIGR03052">
    <property type="entry name" value="PS_I_psaI"/>
    <property type="match status" value="1"/>
</dbReference>
<dbReference type="Pfam" id="PF00796">
    <property type="entry name" value="PSI_8"/>
    <property type="match status" value="1"/>
</dbReference>
<dbReference type="SUPFAM" id="SSF81540">
    <property type="entry name" value="Subunit VIII of photosystem I reaction centre, PsaI"/>
    <property type="match status" value="1"/>
</dbReference>
<evidence type="ECO:0000255" key="1">
    <source>
        <dbReference type="HAMAP-Rule" id="MF_00431"/>
    </source>
</evidence>
<name>PSAI_CYAP4</name>
<reference key="1">
    <citation type="journal article" date="2011" name="MBio">
        <title>Novel metabolic attributes of the genus Cyanothece, comprising a group of unicellular nitrogen-fixing Cyanobacteria.</title>
        <authorList>
            <person name="Bandyopadhyay A."/>
            <person name="Elvitigala T."/>
            <person name="Welsh E."/>
            <person name="Stockel J."/>
            <person name="Liberton M."/>
            <person name="Min H."/>
            <person name="Sherman L.A."/>
            <person name="Pakrasi H.B."/>
        </authorList>
    </citation>
    <scope>NUCLEOTIDE SEQUENCE [LARGE SCALE GENOMIC DNA]</scope>
    <source>
        <strain>PCC 7425 / ATCC 29141</strain>
    </source>
</reference>
<comment type="function">
    <text evidence="1">May help in the organization of the PsaL subunit.</text>
</comment>
<comment type="subcellular location">
    <subcellularLocation>
        <location evidence="1">Cellular thylakoid membrane</location>
        <topology evidence="1">Single-pass membrane protein</topology>
    </subcellularLocation>
</comment>
<comment type="similarity">
    <text evidence="1">Belongs to the PsaI family.</text>
</comment>
<keyword id="KW-0472">Membrane</keyword>
<keyword id="KW-0602">Photosynthesis</keyword>
<keyword id="KW-0603">Photosystem I</keyword>
<keyword id="KW-0793">Thylakoid</keyword>
<keyword id="KW-0812">Transmembrane</keyword>
<keyword id="KW-1133">Transmembrane helix</keyword>
<organism>
    <name type="scientific">Cyanothece sp. (strain PCC 7425 / ATCC 29141)</name>
    <dbReference type="NCBI Taxonomy" id="395961"/>
    <lineage>
        <taxon>Bacteria</taxon>
        <taxon>Bacillati</taxon>
        <taxon>Cyanobacteriota</taxon>
        <taxon>Cyanophyceae</taxon>
        <taxon>Gomontiellales</taxon>
        <taxon>Cyanothecaceae</taxon>
        <taxon>Cyanothece</taxon>
    </lineage>
</organism>
<feature type="chain" id="PRO_1000134939" description="Photosystem I reaction center subunit VIII">
    <location>
        <begin position="1"/>
        <end position="41"/>
    </location>
</feature>
<feature type="transmembrane region" description="Helical" evidence="1">
    <location>
        <begin position="12"/>
        <end position="32"/>
    </location>
</feature>
<sequence length="41" mass="4568">MTGSYAASFLPWIMIPVTCWLFPVVVMGLLFIYIESDAPST</sequence>
<gene>
    <name evidence="1" type="primary">psaI</name>
    <name type="ordered locus">Cyan7425_1771</name>
</gene>